<evidence type="ECO:0000255" key="1"/>
<evidence type="ECO:0000255" key="2">
    <source>
        <dbReference type="PROSITE-ProRule" id="PRU00434"/>
    </source>
</evidence>
<evidence type="ECO:0000256" key="3">
    <source>
        <dbReference type="SAM" id="MobiDB-lite"/>
    </source>
</evidence>
<evidence type="ECO:0000269" key="4">
    <source>
    </source>
</evidence>
<evidence type="ECO:0000269" key="5">
    <source>
    </source>
</evidence>
<evidence type="ECO:0000305" key="6"/>
<comment type="function">
    <text evidence="5">Functions in the engulfment of cell corpses during embryonic programmed cell death to translocate molecules that mediate homotypic adhesion between cell surfaces of the dying and engulfing cells.</text>
</comment>
<comment type="subcellular location">
    <subcellularLocation>
        <location evidence="6">Membrane</location>
        <topology evidence="6">Multi-pass membrane protein</topology>
    </subcellularLocation>
</comment>
<comment type="alternative products">
    <event type="alternative splicing"/>
    <isoform>
        <id>P34358-1</id>
        <name>c</name>
        <sequence type="displayed"/>
    </isoform>
    <isoform>
        <id>P34358-2</id>
        <name>a</name>
        <sequence type="described" ref="VSP_000044 VSP_000045"/>
    </isoform>
    <isoform>
        <id>P34358-3</id>
        <name>b</name>
        <sequence type="described" ref="VSP_000044"/>
    </isoform>
    <text>Experimental confirmation may be lacking for some isoforms.</text>
</comment>
<comment type="tissue specificity">
    <text>Ubiquitous in embryos. Expressed in larval germline precursors. Expression in larvae and adults is seen in amphid sheath cells, pharyngeal-intestinal valve and phasmid sheath cells. Low levels of expression are also seen in gonadal sheath cells.</text>
</comment>
<comment type="domain">
    <text>Multifunctional polypeptide with two homologous halves, each containing a hydrophobic membrane-anchoring domain and an ATP binding cassette (ABC) domain.</text>
</comment>
<comment type="similarity">
    <text evidence="6">Belongs to the ABC transporter superfamily. ABCA family.</text>
</comment>
<proteinExistence type="evidence at protein level"/>
<protein>
    <recommendedName>
        <fullName>ABC transporter ced-7</fullName>
    </recommendedName>
    <alternativeName>
        <fullName>Cell death protein 7</fullName>
    </alternativeName>
</protein>
<keyword id="KW-0025">Alternative splicing</keyword>
<keyword id="KW-0067">ATP-binding</keyword>
<keyword id="KW-0325">Glycoprotein</keyword>
<keyword id="KW-0472">Membrane</keyword>
<keyword id="KW-0547">Nucleotide-binding</keyword>
<keyword id="KW-1185">Reference proteome</keyword>
<keyword id="KW-0677">Repeat</keyword>
<keyword id="KW-0812">Transmembrane</keyword>
<keyword id="KW-1133">Transmembrane helix</keyword>
<keyword id="KW-0813">Transport</keyword>
<organism>
    <name type="scientific">Caenorhabditis elegans</name>
    <dbReference type="NCBI Taxonomy" id="6239"/>
    <lineage>
        <taxon>Eukaryota</taxon>
        <taxon>Metazoa</taxon>
        <taxon>Ecdysozoa</taxon>
        <taxon>Nematoda</taxon>
        <taxon>Chromadorea</taxon>
        <taxon>Rhabditida</taxon>
        <taxon>Rhabditina</taxon>
        <taxon>Rhabditomorpha</taxon>
        <taxon>Rhabditoidea</taxon>
        <taxon>Rhabditidae</taxon>
        <taxon>Peloderinae</taxon>
        <taxon>Caenorhabditis</taxon>
    </lineage>
</organism>
<sequence>MNRLRQFSLLLWKDWVLLRRNKVWTLFELIIPCLLLGPLVYLVVKNADHTSSPENIYDNFQVKGTVEDVFLESNFIKPIYKRWCLRSDVVVGYTSKDAAAKRTVDDLMKKFAERFQSAKLKLSVKNESSEEQLLTVLRNDLPMLNETFCAINSYAAGVVFDEVDVTNKKLNYRILLGKTPEETWHLTETSYNPYGPSSGRYSRIPSSPPYWTSAFLTFQHAIESSFLSSVQSGAPDLPITLRGLPEPRYKTSSVSAFIDFFPFIWAFVTFINVIHITREIAAENHAVKPYLTAMGLSTFMFYAAHVVMAFLKFFVIFLCSIIPLTFVMEFVSPAALIVTVLMYGLGAVIFGAFVASFFNNTNSAIKAILVAWGAMIGISYKLRPELDQISSCFLYGLNINGAFALAVEAISDYMRRERELNLTNMFNDSSLHFSLGWALVMMIVDILWMSIGALVVDHIRTSADFSLRTLFDFEAPEDDENQTDGVTAQNTRINEQVRNRVRRSDMEIQMNPMASTSLNPPNADSDSLLEGSTEADGARDTARADIIVRNLVKIWSTTGERAVDGLSLRAVRGQCSILLGHNGAGKSTTFSSIAGIIRPTNGRITICGYDVGNEPGETRRHIGMCPQYNPLYDQLTVSEHLKLVYGLKGAREKDFKQDMKRLLSDVKLDFKENEKAVNLSGGMKRKLCVCMALIGDSEVVLLDEPTAGMDPGARQDVQKLVEREKANRTILLTTHYMDEAERLGDWVFIMSHGKLVASGTNQYLKQKFGTGYLLTVVLDHNGDKRKMAVILTDVCTHYVKEAERGEMHGQQIEIILPEARKKEFVPLFQALEAIQDRNYRSNVFDNMPNTLKSQLATLEMRSFGLSLNTLEQVFITIGDKVDKAIASRQNSRISHNSRNASEPSLKPAGYDTQSSTKSADSYQKLMDSQARGPEKSGVAKMVAQFISIMRKKFLYSRRNWAQLFTQVLIPIILLGLVGSLTTLKSNNTDQFSVRSLTPSGIEPSKVVWRFENGTIPEEAANFEKILRKSGGFEVLNYNTKNPLPNITKSLIGEMPPATIGMTMNSDNLEALFNMRYYHVLPTLISMINRARLTGTVDAEISSGVFLYSKSTSNSNLLPSQLIDVLLAPMLILIFAMVTSTFVMFLIEERTCQFAHQQFLTGISPITFYSASLIYDGILYSLICLIFLFMFLAFHWMYDHLAIVILFWFLYFFSSVPFIYAVSFLFQSPSKANVLLIIWQVVISGAALLAVFLIFMIFNIDEWLKSILVNIFMFLLPSYAFGSAIITINTYGMILPSEELMNWDHCGKNAWLMGTFGVCSFALFVLLQFKFVRRFLSQVWTVRRSSHNNVQPMMGDLPVCESVSEERERVHRVNSQNSALVIKDLTKTFGRFTAVNELCLAVDQKECFGLLGVNGAGKTTTFNILTGQSFASSGEAMIGGRDVTELISIGYCPQFDALMLDLTGRESLEILAQMHGFENYKAKAELILECVGMIAHADKLVRFYSGGQKRKISVGVALLAPTQMIILDEPTAGIDPKARREVWELLLWCREHSNSALMLTSHSMDECEALCSRIAVLNRGSLIAIGSSQELKSLYGNNYTMTLSLYEPNQRDMVVQLVQTRLPNSVLKTTSTNKTLNLKWQIPKEKEDCWSAKFEMVQALAKDLGVKDFILAQSSLEETFLRLAGLDEDQLDTHSTVEISHSTHV</sequence>
<gene>
    <name type="primary">ced-7</name>
    <name type="ORF">C48B4.4</name>
</gene>
<accession>P34358</accession>
<accession>O76287</accession>
<accession>P34359</accession>
<dbReference type="EMBL" id="AF049142">
    <property type="protein sequence ID" value="AAC24116.1"/>
    <property type="molecule type" value="mRNA"/>
</dbReference>
<dbReference type="EMBL" id="Z29117">
    <property type="protein sequence ID" value="CAA82384.2"/>
    <property type="molecule type" value="Genomic_DNA"/>
</dbReference>
<dbReference type="EMBL" id="Z29117">
    <property type="protein sequence ID" value="CAA82383.2"/>
    <property type="molecule type" value="Genomic_DNA"/>
</dbReference>
<dbReference type="EMBL" id="Z29117">
    <property type="protein sequence ID" value="CAC42271.1"/>
    <property type="molecule type" value="Genomic_DNA"/>
</dbReference>
<dbReference type="PIR" id="F88559">
    <property type="entry name" value="F88559"/>
</dbReference>
<dbReference type="PIR" id="T42749">
    <property type="entry name" value="T42749"/>
</dbReference>
<dbReference type="RefSeq" id="NP_001021225.1">
    <molecule id="P34358-3"/>
    <property type="nucleotide sequence ID" value="NM_001026054.4"/>
</dbReference>
<dbReference type="RefSeq" id="NP_001021226.1">
    <property type="nucleotide sequence ID" value="NM_001026055.2"/>
</dbReference>
<dbReference type="RefSeq" id="NP_001366984.1">
    <molecule id="P34358-1"/>
    <property type="nucleotide sequence ID" value="NM_001379863.2"/>
</dbReference>
<dbReference type="RefSeq" id="NP_499115.2">
    <molecule id="P34358-2"/>
    <property type="nucleotide sequence ID" value="NM_066714.5"/>
</dbReference>
<dbReference type="SMR" id="P34358"/>
<dbReference type="BioGRID" id="41547">
    <property type="interactions" value="1"/>
</dbReference>
<dbReference type="FunCoup" id="P34358">
    <property type="interactions" value="61"/>
</dbReference>
<dbReference type="STRING" id="6239.C48B4.4d.1"/>
<dbReference type="TCDB" id="3.A.1.211.29">
    <property type="family name" value="the atp-binding cassette (abc) superfamily"/>
</dbReference>
<dbReference type="TCDB" id="3.A.1.211.4">
    <property type="family name" value="the atp-binding cassette (abc) superfamily"/>
</dbReference>
<dbReference type="GlyCosmos" id="P34358">
    <property type="glycosylation" value="14 sites, No reported glycans"/>
</dbReference>
<dbReference type="iPTMnet" id="P34358"/>
<dbReference type="PaxDb" id="6239-C48B4.4d"/>
<dbReference type="PeptideAtlas" id="P34358"/>
<dbReference type="EnsemblMetazoa" id="C48B4.4a.1">
    <molecule id="P34358-2"/>
    <property type="protein sequence ID" value="C48B4.4a.1"/>
    <property type="gene ID" value="WBGene00000421"/>
</dbReference>
<dbReference type="EnsemblMetazoa" id="C48B4.4a.2">
    <molecule id="P34358-2"/>
    <property type="protein sequence ID" value="C48B4.4a.2"/>
    <property type="gene ID" value="WBGene00000421"/>
</dbReference>
<dbReference type="EnsemblMetazoa" id="C48B4.4b.1">
    <molecule id="P34358-3"/>
    <property type="protein sequence ID" value="C48B4.4b.1"/>
    <property type="gene ID" value="WBGene00000421"/>
</dbReference>
<dbReference type="EnsemblMetazoa" id="C48B4.4c.1">
    <molecule id="P34358-1"/>
    <property type="protein sequence ID" value="C48B4.4c.1"/>
    <property type="gene ID" value="WBGene00000421"/>
</dbReference>
<dbReference type="GeneID" id="176352"/>
<dbReference type="KEGG" id="cel:CELE_C48B4.4"/>
<dbReference type="UCSC" id="C48B4.4b">
    <molecule id="P34358-1"/>
    <property type="organism name" value="c. elegans"/>
</dbReference>
<dbReference type="AGR" id="WB:WBGene00000421"/>
<dbReference type="CTD" id="176352"/>
<dbReference type="WormBase" id="C48B4.4a">
    <molecule id="P34358-2"/>
    <property type="protein sequence ID" value="CE24856"/>
    <property type="gene ID" value="WBGene00000421"/>
    <property type="gene designation" value="ced-7"/>
</dbReference>
<dbReference type="WormBase" id="C48B4.4b">
    <molecule id="P34358-3"/>
    <property type="protein sequence ID" value="CE24857"/>
    <property type="gene ID" value="WBGene00000421"/>
    <property type="gene designation" value="ced-7"/>
</dbReference>
<dbReference type="WormBase" id="C48B4.4c">
    <molecule id="P34358-1"/>
    <property type="protein sequence ID" value="CE27867"/>
    <property type="gene ID" value="WBGene00000421"/>
    <property type="gene designation" value="ced-7"/>
</dbReference>
<dbReference type="eggNOG" id="KOG0059">
    <property type="taxonomic scope" value="Eukaryota"/>
</dbReference>
<dbReference type="InParanoid" id="P34358"/>
<dbReference type="OrthoDB" id="10255969at2759"/>
<dbReference type="PhylomeDB" id="P34358"/>
<dbReference type="PRO" id="PR:P34358"/>
<dbReference type="Proteomes" id="UP000001940">
    <property type="component" value="Chromosome III"/>
</dbReference>
<dbReference type="Bgee" id="WBGene00000421">
    <property type="expression patterns" value="Expressed in germ line (C elegans) and 4 other cell types or tissues"/>
</dbReference>
<dbReference type="ExpressionAtlas" id="P34358">
    <property type="expression patterns" value="baseline and differential"/>
</dbReference>
<dbReference type="GO" id="GO:0043231">
    <property type="term" value="C:intracellular membrane-bounded organelle"/>
    <property type="evidence" value="ECO:0000318"/>
    <property type="project" value="GO_Central"/>
</dbReference>
<dbReference type="GO" id="GO:0005886">
    <property type="term" value="C:plasma membrane"/>
    <property type="evidence" value="ECO:0000314"/>
    <property type="project" value="WormBase"/>
</dbReference>
<dbReference type="GO" id="GO:0140359">
    <property type="term" value="F:ABC-type transporter activity"/>
    <property type="evidence" value="ECO:0007669"/>
    <property type="project" value="InterPro"/>
</dbReference>
<dbReference type="GO" id="GO:0005524">
    <property type="term" value="F:ATP binding"/>
    <property type="evidence" value="ECO:0007669"/>
    <property type="project" value="UniProtKB-KW"/>
</dbReference>
<dbReference type="GO" id="GO:0016887">
    <property type="term" value="F:ATP hydrolysis activity"/>
    <property type="evidence" value="ECO:0007669"/>
    <property type="project" value="InterPro"/>
</dbReference>
<dbReference type="GO" id="GO:0042626">
    <property type="term" value="F:ATPase-coupled transmembrane transporter activity"/>
    <property type="evidence" value="ECO:0000318"/>
    <property type="project" value="GO_Central"/>
</dbReference>
<dbReference type="GO" id="GO:0005319">
    <property type="term" value="F:lipid transporter activity"/>
    <property type="evidence" value="ECO:0000318"/>
    <property type="project" value="GO_Central"/>
</dbReference>
<dbReference type="GO" id="GO:0022857">
    <property type="term" value="F:transmembrane transporter activity"/>
    <property type="evidence" value="ECO:0000250"/>
    <property type="project" value="WormBase"/>
</dbReference>
<dbReference type="GO" id="GO:1902742">
    <property type="term" value="P:apoptotic process involved in development"/>
    <property type="evidence" value="ECO:0000315"/>
    <property type="project" value="UniProtKB"/>
</dbReference>
<dbReference type="GO" id="GO:0000132">
    <property type="term" value="P:establishment of mitotic spindle orientation"/>
    <property type="evidence" value="ECO:0000316"/>
    <property type="project" value="UniProtKB"/>
</dbReference>
<dbReference type="GO" id="GO:0070986">
    <property type="term" value="P:left/right axis specification"/>
    <property type="evidence" value="ECO:0000316"/>
    <property type="project" value="UniProtKB"/>
</dbReference>
<dbReference type="GO" id="GO:0006869">
    <property type="term" value="P:lipid transport"/>
    <property type="evidence" value="ECO:0000250"/>
    <property type="project" value="WormBase"/>
</dbReference>
<dbReference type="GO" id="GO:0033700">
    <property type="term" value="P:phospholipid efflux"/>
    <property type="evidence" value="ECO:0000315"/>
    <property type="project" value="WormBase"/>
</dbReference>
<dbReference type="GO" id="GO:1904747">
    <property type="term" value="P:positive regulation of apoptotic process involved in development"/>
    <property type="evidence" value="ECO:0000315"/>
    <property type="project" value="UniProtKB"/>
</dbReference>
<dbReference type="GO" id="GO:1903356">
    <property type="term" value="P:positive regulation of distal tip cell migration"/>
    <property type="evidence" value="ECO:0000316"/>
    <property type="project" value="UniProtKB"/>
</dbReference>
<dbReference type="GO" id="GO:1901076">
    <property type="term" value="P:positive regulation of engulfment of apoptotic cell"/>
    <property type="evidence" value="ECO:0000315"/>
    <property type="project" value="UniProtKB"/>
</dbReference>
<dbReference type="GO" id="GO:0012501">
    <property type="term" value="P:programmed cell death"/>
    <property type="evidence" value="ECO:0000315"/>
    <property type="project" value="WormBase"/>
</dbReference>
<dbReference type="CDD" id="cd03263">
    <property type="entry name" value="ABC_subfamily_A"/>
    <property type="match status" value="2"/>
</dbReference>
<dbReference type="FunFam" id="3.40.50.300:FF:000933">
    <property type="entry name" value="ABC transporter A family member 7"/>
    <property type="match status" value="1"/>
</dbReference>
<dbReference type="FunFam" id="3.40.50.300:FF:001598">
    <property type="entry name" value="ABC transporter ced-7"/>
    <property type="match status" value="1"/>
</dbReference>
<dbReference type="Gene3D" id="3.40.50.300">
    <property type="entry name" value="P-loop containing nucleotide triphosphate hydrolases"/>
    <property type="match status" value="2"/>
</dbReference>
<dbReference type="InterPro" id="IPR003593">
    <property type="entry name" value="AAA+_ATPase"/>
</dbReference>
<dbReference type="InterPro" id="IPR013525">
    <property type="entry name" value="ABC2_TM"/>
</dbReference>
<dbReference type="InterPro" id="IPR003439">
    <property type="entry name" value="ABC_transporter-like_ATP-bd"/>
</dbReference>
<dbReference type="InterPro" id="IPR017871">
    <property type="entry name" value="ABC_transporter-like_CS"/>
</dbReference>
<dbReference type="InterPro" id="IPR026082">
    <property type="entry name" value="ABCA"/>
</dbReference>
<dbReference type="InterPro" id="IPR027417">
    <property type="entry name" value="P-loop_NTPase"/>
</dbReference>
<dbReference type="PANTHER" id="PTHR19229:SF271">
    <property type="entry name" value="ABC TRANSPORTER CED-7"/>
    <property type="match status" value="1"/>
</dbReference>
<dbReference type="PANTHER" id="PTHR19229">
    <property type="entry name" value="ATP-BINDING CASSETTE TRANSPORTER SUBFAMILY A ABCA"/>
    <property type="match status" value="1"/>
</dbReference>
<dbReference type="Pfam" id="PF12698">
    <property type="entry name" value="ABC2_membrane_3"/>
    <property type="match status" value="2"/>
</dbReference>
<dbReference type="Pfam" id="PF00005">
    <property type="entry name" value="ABC_tran"/>
    <property type="match status" value="2"/>
</dbReference>
<dbReference type="SMART" id="SM00382">
    <property type="entry name" value="AAA"/>
    <property type="match status" value="2"/>
</dbReference>
<dbReference type="SUPFAM" id="SSF52540">
    <property type="entry name" value="P-loop containing nucleoside triphosphate hydrolases"/>
    <property type="match status" value="2"/>
</dbReference>
<dbReference type="PROSITE" id="PS00211">
    <property type="entry name" value="ABC_TRANSPORTER_1"/>
    <property type="match status" value="2"/>
</dbReference>
<dbReference type="PROSITE" id="PS50893">
    <property type="entry name" value="ABC_TRANSPORTER_2"/>
    <property type="match status" value="2"/>
</dbReference>
<name>CED7_CAEEL</name>
<reference key="1">
    <citation type="journal article" date="1998" name="Cell">
        <title>The C. elegans cell corpse engulfment gene ced-7 encodes a protein similar to ABC transporters.</title>
        <authorList>
            <person name="Wu Y.-C."/>
            <person name="Horvitz H.R."/>
        </authorList>
    </citation>
    <scope>NUCLEOTIDE SEQUENCE [MRNA] (ISOFORM C)</scope>
    <scope>FUNCTION</scope>
    <scope>MUTAGENESIS OF LYS-586; GLU-639 AND LYS-1417</scope>
    <source>
        <strain>Bristol N2</strain>
    </source>
</reference>
<reference key="2">
    <citation type="journal article" date="1994" name="Nature">
        <title>2.2 Mb of contiguous nucleotide sequence from chromosome III of C. elegans.</title>
        <authorList>
            <person name="Wilson R."/>
            <person name="Ainscough R."/>
            <person name="Anderson K."/>
            <person name="Baynes C."/>
            <person name="Berks M."/>
            <person name="Bonfield J."/>
            <person name="Burton J."/>
            <person name="Connell M."/>
            <person name="Copsey T."/>
            <person name="Cooper J."/>
            <person name="Coulson A."/>
            <person name="Craxton M."/>
            <person name="Dear S."/>
            <person name="Du Z."/>
            <person name="Durbin R."/>
            <person name="Favello A."/>
            <person name="Fraser A."/>
            <person name="Fulton L."/>
            <person name="Gardner A."/>
            <person name="Green P."/>
            <person name="Hawkins T."/>
            <person name="Hillier L."/>
            <person name="Jier M."/>
            <person name="Johnston L."/>
            <person name="Jones M."/>
            <person name="Kershaw J."/>
            <person name="Kirsten J."/>
            <person name="Laisster N."/>
            <person name="Latreille P."/>
            <person name="Lightning J."/>
            <person name="Lloyd C."/>
            <person name="Mortimore B."/>
            <person name="O'Callaghan M."/>
            <person name="Parsons J."/>
            <person name="Percy C."/>
            <person name="Rifken L."/>
            <person name="Roopra A."/>
            <person name="Saunders D."/>
            <person name="Shownkeen R."/>
            <person name="Sims M."/>
            <person name="Smaldon N."/>
            <person name="Smith A."/>
            <person name="Smith M."/>
            <person name="Sonnhammer E."/>
            <person name="Staden R."/>
            <person name="Sulston J."/>
            <person name="Thierry-Mieg J."/>
            <person name="Thomas K."/>
            <person name="Vaudin M."/>
            <person name="Vaughan K."/>
            <person name="Waterston R."/>
            <person name="Watson A."/>
            <person name="Weinstock L."/>
            <person name="Wilkinson-Sproat J."/>
            <person name="Wohldman P."/>
        </authorList>
    </citation>
    <scope>NUCLEOTIDE SEQUENCE [LARGE SCALE GENOMIC DNA]</scope>
    <source>
        <strain>Bristol N2</strain>
    </source>
</reference>
<reference key="3">
    <citation type="journal article" date="1998" name="Science">
        <title>Genome sequence of the nematode C. elegans: a platform for investigating biology.</title>
        <authorList>
            <consortium name="The C. elegans sequencing consortium"/>
        </authorList>
    </citation>
    <scope>NUCLEOTIDE SEQUENCE [LARGE SCALE GENOMIC DNA]</scope>
    <scope>ALTERNATIVE SPLICING</scope>
    <source>
        <strain>Bristol N2</strain>
    </source>
</reference>
<reference key="4">
    <citation type="journal article" date="2007" name="Mol. Cell. Proteomics">
        <title>Proteomics reveals N-linked glycoprotein diversity in Caenorhabditis elegans and suggests an atypical translocation mechanism for integral membrane proteins.</title>
        <authorList>
            <person name="Kaji H."/>
            <person name="Kamiie J."/>
            <person name="Kawakami H."/>
            <person name="Kido K."/>
            <person name="Yamauchi Y."/>
            <person name="Shinkawa T."/>
            <person name="Taoka M."/>
            <person name="Takahashi N."/>
            <person name="Isobe T."/>
        </authorList>
    </citation>
    <scope>GLYCOSYLATION [LARGE SCALE ANALYSIS] AT ASN-126; ASN-1012 AND ASN-1045</scope>
    <scope>IDENTIFICATION BY MASS SPECTROMETRY</scope>
    <source>
        <strain>Bristol N2</strain>
    </source>
</reference>
<feature type="chain" id="PRO_0000093377" description="ABC transporter ced-7">
    <location>
        <begin position="1"/>
        <end position="1704"/>
    </location>
</feature>
<feature type="transmembrane region" description="Helical" evidence="1">
    <location>
        <begin position="23"/>
        <end position="43"/>
    </location>
</feature>
<feature type="transmembrane region" description="Helical" evidence="1">
    <location>
        <begin position="256"/>
        <end position="276"/>
    </location>
</feature>
<feature type="transmembrane region" description="Helical" evidence="1">
    <location>
        <begin position="306"/>
        <end position="326"/>
    </location>
</feature>
<feature type="transmembrane region" description="Helical" evidence="1">
    <location>
        <begin position="334"/>
        <end position="354"/>
    </location>
</feature>
<feature type="transmembrane region" description="Helical" evidence="1">
    <location>
        <begin position="362"/>
        <end position="382"/>
    </location>
</feature>
<feature type="transmembrane region" description="Helical" evidence="1">
    <location>
        <begin position="389"/>
        <end position="409"/>
    </location>
</feature>
<feature type="transmembrane region" description="Helical" evidence="1">
    <location>
        <begin position="436"/>
        <end position="456"/>
    </location>
</feature>
<feature type="transmembrane region" description="Helical" evidence="1">
    <location>
        <begin position="963"/>
        <end position="983"/>
    </location>
</feature>
<feature type="transmembrane region" description="Helical" evidence="1">
    <location>
        <begin position="1126"/>
        <end position="1146"/>
    </location>
</feature>
<feature type="transmembrane region" description="Helical" evidence="1">
    <location>
        <begin position="1153"/>
        <end position="1173"/>
    </location>
</feature>
<feature type="transmembrane region" description="Helical" evidence="1">
    <location>
        <begin position="1176"/>
        <end position="1196"/>
    </location>
</feature>
<feature type="transmembrane region" description="Helical" evidence="1">
    <location>
        <begin position="1201"/>
        <end position="1221"/>
    </location>
</feature>
<feature type="transmembrane region" description="Helical" evidence="1">
    <location>
        <begin position="1234"/>
        <end position="1254"/>
    </location>
</feature>
<feature type="transmembrane region" description="Helical" evidence="1">
    <location>
        <begin position="1266"/>
        <end position="1286"/>
    </location>
</feature>
<feature type="transmembrane region" description="Helical" evidence="1">
    <location>
        <begin position="1311"/>
        <end position="1331"/>
    </location>
</feature>
<feature type="domain" description="ABC transporter 1" evidence="2">
    <location>
        <begin position="546"/>
        <end position="777"/>
    </location>
</feature>
<feature type="domain" description="ABC transporter 2" evidence="2">
    <location>
        <begin position="1379"/>
        <end position="1603"/>
    </location>
</feature>
<feature type="region of interest" description="Disordered" evidence="3">
    <location>
        <begin position="511"/>
        <end position="536"/>
    </location>
</feature>
<feature type="region of interest" description="Disordered" evidence="3">
    <location>
        <begin position="888"/>
        <end position="933"/>
    </location>
</feature>
<feature type="compositionally biased region" description="Polar residues" evidence="3">
    <location>
        <begin position="512"/>
        <end position="525"/>
    </location>
</feature>
<feature type="compositionally biased region" description="Polar residues" evidence="3">
    <location>
        <begin position="888"/>
        <end position="902"/>
    </location>
</feature>
<feature type="compositionally biased region" description="Polar residues" evidence="3">
    <location>
        <begin position="911"/>
        <end position="921"/>
    </location>
</feature>
<feature type="binding site" evidence="2">
    <location>
        <begin position="580"/>
        <end position="587"/>
    </location>
    <ligand>
        <name>ATP</name>
        <dbReference type="ChEBI" id="CHEBI:30616"/>
        <label>1</label>
    </ligand>
</feature>
<feature type="binding site" evidence="2">
    <location>
        <begin position="1411"/>
        <end position="1418"/>
    </location>
    <ligand>
        <name>ATP</name>
        <dbReference type="ChEBI" id="CHEBI:30616"/>
        <label>2</label>
    </ligand>
</feature>
<feature type="glycosylation site" description="N-linked (GlcNAc...) asparagine" evidence="4">
    <location>
        <position position="126"/>
    </location>
</feature>
<feature type="glycosylation site" description="N-linked (GlcNAc...) asparagine" evidence="1">
    <location>
        <position position="145"/>
    </location>
</feature>
<feature type="glycosylation site" description="N-linked (GlcNAc...) asparagine" evidence="1">
    <location>
        <position position="359"/>
    </location>
</feature>
<feature type="glycosylation site" description="N-linked (GlcNAc...) asparagine" evidence="1">
    <location>
        <position position="421"/>
    </location>
</feature>
<feature type="glycosylation site" description="N-linked (GlcNAc...) asparagine" evidence="1">
    <location>
        <position position="427"/>
    </location>
</feature>
<feature type="glycosylation site" description="N-linked (GlcNAc...) asparagine" evidence="1">
    <location>
        <position position="481"/>
    </location>
</feature>
<feature type="glycosylation site" description="N-linked (GlcNAc...) asparagine" evidence="1">
    <location>
        <position position="678"/>
    </location>
</feature>
<feature type="glycosylation site" description="N-linked (GlcNAc...) asparagine" evidence="1">
    <location>
        <position position="727"/>
    </location>
</feature>
<feature type="glycosylation site" description="N-linked (GlcNAc...) asparagine" evidence="1">
    <location>
        <position position="899"/>
    </location>
</feature>
<feature type="glycosylation site" description="N-linked (GlcNAc...) asparagine" evidence="1">
    <location>
        <position position="986"/>
    </location>
</feature>
<feature type="glycosylation site" description="N-linked (GlcNAc...) asparagine" evidence="4">
    <location>
        <position position="1012"/>
    </location>
</feature>
<feature type="glycosylation site" description="N-linked (GlcNAc...) asparagine" evidence="4">
    <location>
        <position position="1045"/>
    </location>
</feature>
<feature type="glycosylation site" description="N-linked (GlcNAc...) asparagine" evidence="1">
    <location>
        <position position="1597"/>
    </location>
</feature>
<feature type="glycosylation site" description="N-linked (GlcNAc...) asparagine" evidence="1">
    <location>
        <position position="1632"/>
    </location>
</feature>
<feature type="splice variant" id="VSP_000044" description="In isoform a and isoform b." evidence="6">
    <location>
        <begin position="496"/>
        <end position="508"/>
    </location>
</feature>
<feature type="splice variant" id="VSP_000045" description="In isoform a." evidence="6">
    <location>
        <begin position="992"/>
        <end position="993"/>
    </location>
</feature>
<feature type="mutagenesis site" description="Cell corpses not engulfed." evidence="5">
    <original>K</original>
    <variation>R</variation>
    <location>
        <position position="586"/>
    </location>
</feature>
<feature type="mutagenesis site" description="Cell corpses not engulfed." evidence="5">
    <original>E</original>
    <variation>G</variation>
    <location>
        <position position="639"/>
    </location>
</feature>
<feature type="mutagenesis site" description="Some cell corpses not engulfed." evidence="5">
    <original>K</original>
    <variation>R</variation>
    <location>
        <position position="1417"/>
    </location>
</feature>